<evidence type="ECO:0000255" key="1">
    <source>
        <dbReference type="HAMAP-Rule" id="MF_00409"/>
    </source>
</evidence>
<organism>
    <name type="scientific">Campylobacter jejuni subsp. jejuni serotype O:2 (strain ATCC 700819 / NCTC 11168)</name>
    <dbReference type="NCBI Taxonomy" id="192222"/>
    <lineage>
        <taxon>Bacteria</taxon>
        <taxon>Pseudomonadati</taxon>
        <taxon>Campylobacterota</taxon>
        <taxon>Epsilonproteobacteria</taxon>
        <taxon>Campylobacterales</taxon>
        <taxon>Campylobacteraceae</taxon>
        <taxon>Campylobacter</taxon>
    </lineage>
</organism>
<name>LPXK_CAMJE</name>
<sequence>MNEEKNYELWLDNYFFKPNFWQKCLAFILLPLSVLYAFFAILNTFFRKKIVFKKPVISVGNLSFGGNGKTPLCKAIAREFDGVFIVLRGYKRKSKGLFVVKNQNEILCTLTQSGDEAMEYAFEENIKGVIVSEDRVKGIEKAFELGAKIVVLDDAFSKFHIKKFDILLESKIKPYFNFTLPSGAYRLPKFYEKRADFIALEGRDFVRYSFVKENPKAVLVTAIAKPFRLYEHFIKARACYFFKDHYEFKKEELENLLKKHNCDTLMLTFKDFVKVKDFGFKCQIIELNIELKDSLREKIKTYIKEFEQ</sequence>
<proteinExistence type="inferred from homology"/>
<reference key="1">
    <citation type="journal article" date="2000" name="Nature">
        <title>The genome sequence of the food-borne pathogen Campylobacter jejuni reveals hypervariable sequences.</title>
        <authorList>
            <person name="Parkhill J."/>
            <person name="Wren B.W."/>
            <person name="Mungall K.L."/>
            <person name="Ketley J.M."/>
            <person name="Churcher C.M."/>
            <person name="Basham D."/>
            <person name="Chillingworth T."/>
            <person name="Davies R.M."/>
            <person name="Feltwell T."/>
            <person name="Holroyd S."/>
            <person name="Jagels K."/>
            <person name="Karlyshev A.V."/>
            <person name="Moule S."/>
            <person name="Pallen M.J."/>
            <person name="Penn C.W."/>
            <person name="Quail M.A."/>
            <person name="Rajandream M.A."/>
            <person name="Rutherford K.M."/>
            <person name="van Vliet A.H.M."/>
            <person name="Whitehead S."/>
            <person name="Barrell B.G."/>
        </authorList>
    </citation>
    <scope>NUCLEOTIDE SEQUENCE [LARGE SCALE GENOMIC DNA]</scope>
    <source>
        <strain>ATCC 700819 / NCTC 11168</strain>
    </source>
</reference>
<gene>
    <name evidence="1" type="primary">lpxK</name>
    <name type="ordered locus">Cj0811</name>
</gene>
<comment type="function">
    <text evidence="1">Transfers the gamma-phosphate of ATP to the 4'-position of a tetraacyldisaccharide 1-phosphate intermediate (termed DS-1-P) to form tetraacyldisaccharide 1,4'-bis-phosphate (lipid IVA).</text>
</comment>
<comment type="catalytic activity">
    <reaction evidence="1">
        <text>a lipid A disaccharide + ATP = a lipid IVA + ADP + H(+)</text>
        <dbReference type="Rhea" id="RHEA:67840"/>
        <dbReference type="ChEBI" id="CHEBI:15378"/>
        <dbReference type="ChEBI" id="CHEBI:30616"/>
        <dbReference type="ChEBI" id="CHEBI:176343"/>
        <dbReference type="ChEBI" id="CHEBI:176425"/>
        <dbReference type="ChEBI" id="CHEBI:456216"/>
        <dbReference type="EC" id="2.7.1.130"/>
    </reaction>
</comment>
<comment type="pathway">
    <text evidence="1">Glycolipid biosynthesis; lipid IV(A) biosynthesis; lipid IV(A) from (3R)-3-hydroxytetradecanoyl-[acyl-carrier-protein] and UDP-N-acetyl-alpha-D-glucosamine: step 6/6.</text>
</comment>
<comment type="similarity">
    <text evidence="1">Belongs to the LpxK family.</text>
</comment>
<accession>Q9PPA9</accession>
<accession>Q0PA79</accession>
<protein>
    <recommendedName>
        <fullName evidence="1">Tetraacyldisaccharide 4'-kinase</fullName>
        <ecNumber evidence="1">2.7.1.130</ecNumber>
    </recommendedName>
    <alternativeName>
        <fullName evidence="1">Lipid A 4'-kinase</fullName>
    </alternativeName>
</protein>
<keyword id="KW-0067">ATP-binding</keyword>
<keyword id="KW-0418">Kinase</keyword>
<keyword id="KW-0441">Lipid A biosynthesis</keyword>
<keyword id="KW-0444">Lipid biosynthesis</keyword>
<keyword id="KW-0443">Lipid metabolism</keyword>
<keyword id="KW-0547">Nucleotide-binding</keyword>
<keyword id="KW-1185">Reference proteome</keyword>
<keyword id="KW-0808">Transferase</keyword>
<dbReference type="EC" id="2.7.1.130" evidence="1"/>
<dbReference type="EMBL" id="AL111168">
    <property type="protein sequence ID" value="CAL34939.1"/>
    <property type="molecule type" value="Genomic_DNA"/>
</dbReference>
<dbReference type="PIR" id="C81353">
    <property type="entry name" value="C81353"/>
</dbReference>
<dbReference type="RefSeq" id="WP_002852582.1">
    <property type="nucleotide sequence ID" value="NZ_SZUC01000001.1"/>
</dbReference>
<dbReference type="RefSeq" id="YP_002344218.1">
    <property type="nucleotide sequence ID" value="NC_002163.1"/>
</dbReference>
<dbReference type="SMR" id="Q9PPA9"/>
<dbReference type="STRING" id="192222.Cj0811"/>
<dbReference type="PaxDb" id="192222-Cj0811"/>
<dbReference type="EnsemblBacteria" id="CAL34939">
    <property type="protein sequence ID" value="CAL34939"/>
    <property type="gene ID" value="Cj0811"/>
</dbReference>
<dbReference type="GeneID" id="905114"/>
<dbReference type="KEGG" id="cje:Cj0811"/>
<dbReference type="PATRIC" id="fig|192222.6.peg.799"/>
<dbReference type="eggNOG" id="COG1663">
    <property type="taxonomic scope" value="Bacteria"/>
</dbReference>
<dbReference type="HOGENOM" id="CLU_038816_1_0_7"/>
<dbReference type="OrthoDB" id="9766423at2"/>
<dbReference type="UniPathway" id="UPA00359">
    <property type="reaction ID" value="UER00482"/>
</dbReference>
<dbReference type="Proteomes" id="UP000000799">
    <property type="component" value="Chromosome"/>
</dbReference>
<dbReference type="GO" id="GO:0005886">
    <property type="term" value="C:plasma membrane"/>
    <property type="evidence" value="ECO:0007669"/>
    <property type="project" value="TreeGrafter"/>
</dbReference>
<dbReference type="GO" id="GO:0005524">
    <property type="term" value="F:ATP binding"/>
    <property type="evidence" value="ECO:0007669"/>
    <property type="project" value="UniProtKB-UniRule"/>
</dbReference>
<dbReference type="GO" id="GO:0009029">
    <property type="term" value="F:tetraacyldisaccharide 4'-kinase activity"/>
    <property type="evidence" value="ECO:0007669"/>
    <property type="project" value="UniProtKB-UniRule"/>
</dbReference>
<dbReference type="GO" id="GO:0009245">
    <property type="term" value="P:lipid A biosynthetic process"/>
    <property type="evidence" value="ECO:0007669"/>
    <property type="project" value="UniProtKB-UniRule"/>
</dbReference>
<dbReference type="GO" id="GO:0009244">
    <property type="term" value="P:lipopolysaccharide core region biosynthetic process"/>
    <property type="evidence" value="ECO:0007669"/>
    <property type="project" value="TreeGrafter"/>
</dbReference>
<dbReference type="HAMAP" id="MF_00409">
    <property type="entry name" value="LpxK"/>
    <property type="match status" value="1"/>
</dbReference>
<dbReference type="InterPro" id="IPR003758">
    <property type="entry name" value="LpxK"/>
</dbReference>
<dbReference type="NCBIfam" id="NF001892">
    <property type="entry name" value="PRK00652.1-5"/>
    <property type="match status" value="1"/>
</dbReference>
<dbReference type="PANTHER" id="PTHR42724">
    <property type="entry name" value="TETRAACYLDISACCHARIDE 4'-KINASE"/>
    <property type="match status" value="1"/>
</dbReference>
<dbReference type="PANTHER" id="PTHR42724:SF1">
    <property type="entry name" value="TETRAACYLDISACCHARIDE 4'-KINASE, MITOCHONDRIAL-RELATED"/>
    <property type="match status" value="1"/>
</dbReference>
<dbReference type="Pfam" id="PF02606">
    <property type="entry name" value="LpxK"/>
    <property type="match status" value="2"/>
</dbReference>
<feature type="chain" id="PRO_0000190916" description="Tetraacyldisaccharide 4'-kinase">
    <location>
        <begin position="1"/>
        <end position="308"/>
    </location>
</feature>
<feature type="binding site" evidence="1">
    <location>
        <begin position="63"/>
        <end position="70"/>
    </location>
    <ligand>
        <name>ATP</name>
        <dbReference type="ChEBI" id="CHEBI:30616"/>
    </ligand>
</feature>